<comment type="function">
    <text evidence="1">Specifically methylates the N4 position of cytidine in position 1402 (C1402) of 16S rRNA.</text>
</comment>
<comment type="catalytic activity">
    <reaction evidence="1">
        <text>cytidine(1402) in 16S rRNA + S-adenosyl-L-methionine = N(4)-methylcytidine(1402) in 16S rRNA + S-adenosyl-L-homocysteine + H(+)</text>
        <dbReference type="Rhea" id="RHEA:42928"/>
        <dbReference type="Rhea" id="RHEA-COMP:10286"/>
        <dbReference type="Rhea" id="RHEA-COMP:10287"/>
        <dbReference type="ChEBI" id="CHEBI:15378"/>
        <dbReference type="ChEBI" id="CHEBI:57856"/>
        <dbReference type="ChEBI" id="CHEBI:59789"/>
        <dbReference type="ChEBI" id="CHEBI:74506"/>
        <dbReference type="ChEBI" id="CHEBI:82748"/>
        <dbReference type="EC" id="2.1.1.199"/>
    </reaction>
</comment>
<comment type="subcellular location">
    <subcellularLocation>
        <location evidence="1">Cytoplasm</location>
    </subcellularLocation>
</comment>
<comment type="similarity">
    <text evidence="1">Belongs to the methyltransferase superfamily. RsmH family.</text>
</comment>
<reference key="1">
    <citation type="submission" date="2009-07" db="EMBL/GenBank/DDBJ databases">
        <title>Complete sequence of Geobacter sp. M21.</title>
        <authorList>
            <consortium name="US DOE Joint Genome Institute"/>
            <person name="Lucas S."/>
            <person name="Copeland A."/>
            <person name="Lapidus A."/>
            <person name="Glavina del Rio T."/>
            <person name="Dalin E."/>
            <person name="Tice H."/>
            <person name="Bruce D."/>
            <person name="Goodwin L."/>
            <person name="Pitluck S."/>
            <person name="Saunders E."/>
            <person name="Brettin T."/>
            <person name="Detter J.C."/>
            <person name="Han C."/>
            <person name="Larimer F."/>
            <person name="Land M."/>
            <person name="Hauser L."/>
            <person name="Kyrpides N."/>
            <person name="Ovchinnikova G."/>
            <person name="Lovley D."/>
        </authorList>
    </citation>
    <scope>NUCLEOTIDE SEQUENCE [LARGE SCALE GENOMIC DNA]</scope>
    <source>
        <strain>M21</strain>
    </source>
</reference>
<dbReference type="EC" id="2.1.1.199" evidence="1"/>
<dbReference type="EMBL" id="CP001661">
    <property type="protein sequence ID" value="ACT16580.1"/>
    <property type="molecule type" value="Genomic_DNA"/>
</dbReference>
<dbReference type="SMR" id="C6DZJ8"/>
<dbReference type="STRING" id="443144.GM21_0500"/>
<dbReference type="KEGG" id="gem:GM21_0500"/>
<dbReference type="eggNOG" id="COG0275">
    <property type="taxonomic scope" value="Bacteria"/>
</dbReference>
<dbReference type="HOGENOM" id="CLU_038422_2_0_7"/>
<dbReference type="OrthoDB" id="9806637at2"/>
<dbReference type="GO" id="GO:0005737">
    <property type="term" value="C:cytoplasm"/>
    <property type="evidence" value="ECO:0007669"/>
    <property type="project" value="UniProtKB-SubCell"/>
</dbReference>
<dbReference type="GO" id="GO:0071424">
    <property type="term" value="F:rRNA (cytosine-N4-)-methyltransferase activity"/>
    <property type="evidence" value="ECO:0007669"/>
    <property type="project" value="UniProtKB-UniRule"/>
</dbReference>
<dbReference type="GO" id="GO:0070475">
    <property type="term" value="P:rRNA base methylation"/>
    <property type="evidence" value="ECO:0007669"/>
    <property type="project" value="UniProtKB-UniRule"/>
</dbReference>
<dbReference type="FunFam" id="1.10.150.170:FF:000001">
    <property type="entry name" value="Ribosomal RNA small subunit methyltransferase H"/>
    <property type="match status" value="1"/>
</dbReference>
<dbReference type="Gene3D" id="1.10.150.170">
    <property type="entry name" value="Putative methyltransferase TM0872, insert domain"/>
    <property type="match status" value="1"/>
</dbReference>
<dbReference type="Gene3D" id="3.40.50.150">
    <property type="entry name" value="Vaccinia Virus protein VP39"/>
    <property type="match status" value="1"/>
</dbReference>
<dbReference type="HAMAP" id="MF_01007">
    <property type="entry name" value="16SrRNA_methyltr_H"/>
    <property type="match status" value="1"/>
</dbReference>
<dbReference type="InterPro" id="IPR002903">
    <property type="entry name" value="RsmH"/>
</dbReference>
<dbReference type="InterPro" id="IPR023397">
    <property type="entry name" value="SAM-dep_MeTrfase_MraW_recog"/>
</dbReference>
<dbReference type="InterPro" id="IPR029063">
    <property type="entry name" value="SAM-dependent_MTases_sf"/>
</dbReference>
<dbReference type="NCBIfam" id="TIGR00006">
    <property type="entry name" value="16S rRNA (cytosine(1402)-N(4))-methyltransferase RsmH"/>
    <property type="match status" value="1"/>
</dbReference>
<dbReference type="PANTHER" id="PTHR11265:SF0">
    <property type="entry name" value="12S RRNA N4-METHYLCYTIDINE METHYLTRANSFERASE"/>
    <property type="match status" value="1"/>
</dbReference>
<dbReference type="PANTHER" id="PTHR11265">
    <property type="entry name" value="S-ADENOSYL-METHYLTRANSFERASE MRAW"/>
    <property type="match status" value="1"/>
</dbReference>
<dbReference type="Pfam" id="PF01795">
    <property type="entry name" value="Methyltransf_5"/>
    <property type="match status" value="1"/>
</dbReference>
<dbReference type="PIRSF" id="PIRSF004486">
    <property type="entry name" value="MraW"/>
    <property type="match status" value="1"/>
</dbReference>
<dbReference type="SUPFAM" id="SSF81799">
    <property type="entry name" value="Putative methyltransferase TM0872, insert domain"/>
    <property type="match status" value="1"/>
</dbReference>
<dbReference type="SUPFAM" id="SSF53335">
    <property type="entry name" value="S-adenosyl-L-methionine-dependent methyltransferases"/>
    <property type="match status" value="1"/>
</dbReference>
<accession>C6DZJ8</accession>
<gene>
    <name evidence="1" type="primary">rsmH</name>
    <name type="synonym">mraW</name>
    <name type="ordered locus">GM21_0500</name>
</gene>
<evidence type="ECO:0000255" key="1">
    <source>
        <dbReference type="HAMAP-Rule" id="MF_01007"/>
    </source>
</evidence>
<feature type="chain" id="PRO_0000386913" description="Ribosomal RNA small subunit methyltransferase H">
    <location>
        <begin position="1"/>
        <end position="312"/>
    </location>
</feature>
<feature type="binding site" evidence="1">
    <location>
        <begin position="34"/>
        <end position="36"/>
    </location>
    <ligand>
        <name>S-adenosyl-L-methionine</name>
        <dbReference type="ChEBI" id="CHEBI:59789"/>
    </ligand>
</feature>
<feature type="binding site" evidence="1">
    <location>
        <position position="54"/>
    </location>
    <ligand>
        <name>S-adenosyl-L-methionine</name>
        <dbReference type="ChEBI" id="CHEBI:59789"/>
    </ligand>
</feature>
<feature type="binding site" evidence="1">
    <location>
        <position position="81"/>
    </location>
    <ligand>
        <name>S-adenosyl-L-methionine</name>
        <dbReference type="ChEBI" id="CHEBI:59789"/>
    </ligand>
</feature>
<feature type="binding site" evidence="1">
    <location>
        <position position="102"/>
    </location>
    <ligand>
        <name>S-adenosyl-L-methionine</name>
        <dbReference type="ChEBI" id="CHEBI:59789"/>
    </ligand>
</feature>
<feature type="binding site" evidence="1">
    <location>
        <position position="109"/>
    </location>
    <ligand>
        <name>S-adenosyl-L-methionine</name>
        <dbReference type="ChEBI" id="CHEBI:59789"/>
    </ligand>
</feature>
<protein>
    <recommendedName>
        <fullName evidence="1">Ribosomal RNA small subunit methyltransferase H</fullName>
        <ecNumber evidence="1">2.1.1.199</ecNumber>
    </recommendedName>
    <alternativeName>
        <fullName evidence="1">16S rRNA m(4)C1402 methyltransferase</fullName>
    </alternativeName>
    <alternativeName>
        <fullName evidence="1">rRNA (cytosine-N(4)-)-methyltransferase RsmH</fullName>
    </alternativeName>
</protein>
<name>RSMH_GEOSM</name>
<keyword id="KW-0963">Cytoplasm</keyword>
<keyword id="KW-0489">Methyltransferase</keyword>
<keyword id="KW-0698">rRNA processing</keyword>
<keyword id="KW-0949">S-adenosyl-L-methionine</keyword>
<keyword id="KW-0808">Transferase</keyword>
<proteinExistence type="inferred from homology"/>
<sequence length="312" mass="34081">MEDFHHISVLPDEVLQALSPKSGGVYVDGTLGGAGHAGLILTASAPEGRLIGFDRDEEAIAVARQRLSVFGGRVRIIHRNFAGIAQALAEIGVDGIDGFVLDLGVSSHQLDRDERGFSFMHDAPLDMRMDRSSGQSAADLVNTLPEAELYRIISEYGEERWAKRVASFIVKARDERPIETTLELVDVIKGAIPKAKWEERLHPATRTFQALRIAVNEELKSLEEGLQGLLSLLKQGGRGAVISFHSLEDRIVKEGFRAAATGCTCPKELPICVCGRVPRFKLVTRKPITAGESEVAANPRSRSAKLRVVEKI</sequence>
<organism>
    <name type="scientific">Geobacter sp. (strain M21)</name>
    <dbReference type="NCBI Taxonomy" id="443144"/>
    <lineage>
        <taxon>Bacteria</taxon>
        <taxon>Pseudomonadati</taxon>
        <taxon>Thermodesulfobacteriota</taxon>
        <taxon>Desulfuromonadia</taxon>
        <taxon>Geobacterales</taxon>
        <taxon>Geobacteraceae</taxon>
        <taxon>Geobacter</taxon>
    </lineage>
</organism>